<evidence type="ECO:0000250" key="1">
    <source>
        <dbReference type="UniProtKB" id="P35182"/>
    </source>
</evidence>
<evidence type="ECO:0000250" key="2">
    <source>
        <dbReference type="UniProtKB" id="P35813"/>
    </source>
</evidence>
<evidence type="ECO:0000255" key="3">
    <source>
        <dbReference type="PROSITE-ProRule" id="PRU01082"/>
    </source>
</evidence>
<evidence type="ECO:0000305" key="4"/>
<name>PP2C1_PARTE</name>
<sequence length="300" mass="33699">MGPYLSQPKRDKTTTTGQGKSVIFAASEMQGWRNTMEDAHIHRPDIIQDVSVFGVFDGHGGREVAQFVEKHFVDELLKNKNFKEQKFEEALKETFLKMDELLLTPEGQKELNQYKATDTDESYAGCTANVALIYKNTLYVANAGDSRSVLCRNNTNHDMSVDHKPDNPEEKSRIERAGGFVSDGRVNGNLNLSRALGDLEYKRDNKLRSNEQLIIALPDVKKTELTPQDKFILMGCDGVFETLNHQELLKQVNSTIGQAQVTEELLKKAAEDLLDQLLAPDTSQGTGCDNMTTILVYLRR</sequence>
<comment type="function">
    <text evidence="1">Serine and threonine phosphatase.</text>
</comment>
<comment type="catalytic activity">
    <reaction evidence="3">
        <text>O-phospho-L-seryl-[protein] + H2O = L-seryl-[protein] + phosphate</text>
        <dbReference type="Rhea" id="RHEA:20629"/>
        <dbReference type="Rhea" id="RHEA-COMP:9863"/>
        <dbReference type="Rhea" id="RHEA-COMP:11604"/>
        <dbReference type="ChEBI" id="CHEBI:15377"/>
        <dbReference type="ChEBI" id="CHEBI:29999"/>
        <dbReference type="ChEBI" id="CHEBI:43474"/>
        <dbReference type="ChEBI" id="CHEBI:83421"/>
        <dbReference type="EC" id="3.1.3.16"/>
    </reaction>
</comment>
<comment type="catalytic activity">
    <reaction evidence="3">
        <text>O-phospho-L-threonyl-[protein] + H2O = L-threonyl-[protein] + phosphate</text>
        <dbReference type="Rhea" id="RHEA:47004"/>
        <dbReference type="Rhea" id="RHEA-COMP:11060"/>
        <dbReference type="Rhea" id="RHEA-COMP:11605"/>
        <dbReference type="ChEBI" id="CHEBI:15377"/>
        <dbReference type="ChEBI" id="CHEBI:30013"/>
        <dbReference type="ChEBI" id="CHEBI:43474"/>
        <dbReference type="ChEBI" id="CHEBI:61977"/>
        <dbReference type="EC" id="3.1.3.16"/>
    </reaction>
</comment>
<comment type="cofactor">
    <cofactor evidence="3">
        <name>Mg(2+)</name>
        <dbReference type="ChEBI" id="CHEBI:18420"/>
    </cofactor>
    <cofactor evidence="3">
        <name>Mn(2+)</name>
        <dbReference type="ChEBI" id="CHEBI:29035"/>
    </cofactor>
    <text evidence="3">Binds 2 magnesium or manganese ions per subunit.</text>
</comment>
<comment type="subcellular location">
    <subcellularLocation>
        <location>Membrane</location>
        <topology>Peripheral membrane protein</topology>
    </subcellularLocation>
</comment>
<comment type="PTM">
    <text>The N-terminus is blocked.</text>
</comment>
<comment type="similarity">
    <text evidence="4">Belongs to the PP2C family.</text>
</comment>
<organism>
    <name type="scientific">Paramecium tetraurelia</name>
    <dbReference type="NCBI Taxonomy" id="5888"/>
    <lineage>
        <taxon>Eukaryota</taxon>
        <taxon>Sar</taxon>
        <taxon>Alveolata</taxon>
        <taxon>Ciliophora</taxon>
        <taxon>Intramacronucleata</taxon>
        <taxon>Oligohymenophorea</taxon>
        <taxon>Peniculida</taxon>
        <taxon>Parameciidae</taxon>
        <taxon>Paramecium</taxon>
    </lineage>
</organism>
<accession>P49444</accession>
<accession>A0BL55</accession>
<dbReference type="EC" id="3.1.3.16" evidence="3"/>
<dbReference type="EMBL" id="Z36985">
    <property type="protein sequence ID" value="CAA85448.1"/>
    <property type="molecule type" value="mRNA"/>
</dbReference>
<dbReference type="EMBL" id="CT868001">
    <property type="protein sequence ID" value="CAK59272.1"/>
    <property type="molecule type" value="Genomic_DNA"/>
</dbReference>
<dbReference type="PIR" id="A55804">
    <property type="entry name" value="A55804"/>
</dbReference>
<dbReference type="RefSeq" id="XP_001426670.1">
    <property type="nucleotide sequence ID" value="XM_001426633.2"/>
</dbReference>
<dbReference type="SMR" id="P49444"/>
<dbReference type="FunCoup" id="P49444">
    <property type="interactions" value="1470"/>
</dbReference>
<dbReference type="STRING" id="5888.P49444"/>
<dbReference type="EnsemblProtists" id="CAK59272">
    <property type="protein sequence ID" value="CAK59272"/>
    <property type="gene ID" value="GSPATT00029903001"/>
</dbReference>
<dbReference type="GeneID" id="5012454"/>
<dbReference type="KEGG" id="ptm:GSPATT00029903001"/>
<dbReference type="eggNOG" id="KOG0698">
    <property type="taxonomic scope" value="Eukaryota"/>
</dbReference>
<dbReference type="HOGENOM" id="CLU_013173_4_1_1"/>
<dbReference type="InParanoid" id="P49444"/>
<dbReference type="OMA" id="GPGIRNQ"/>
<dbReference type="OrthoDB" id="10264738at2759"/>
<dbReference type="Proteomes" id="UP000000600">
    <property type="component" value="Partially assembled WGS sequence"/>
</dbReference>
<dbReference type="GO" id="GO:0016020">
    <property type="term" value="C:membrane"/>
    <property type="evidence" value="ECO:0007669"/>
    <property type="project" value="UniProtKB-SubCell"/>
</dbReference>
<dbReference type="GO" id="GO:0046872">
    <property type="term" value="F:metal ion binding"/>
    <property type="evidence" value="ECO:0007669"/>
    <property type="project" value="UniProtKB-KW"/>
</dbReference>
<dbReference type="GO" id="GO:0004722">
    <property type="term" value="F:protein serine/threonine phosphatase activity"/>
    <property type="evidence" value="ECO:0007669"/>
    <property type="project" value="UniProtKB-EC"/>
</dbReference>
<dbReference type="GO" id="GO:0007165">
    <property type="term" value="P:signal transduction"/>
    <property type="evidence" value="ECO:0000318"/>
    <property type="project" value="GO_Central"/>
</dbReference>
<dbReference type="CDD" id="cd00143">
    <property type="entry name" value="PP2Cc"/>
    <property type="match status" value="1"/>
</dbReference>
<dbReference type="FunFam" id="3.60.40.10:FF:000064">
    <property type="entry name" value="Protein phosphatase 2C 1"/>
    <property type="match status" value="1"/>
</dbReference>
<dbReference type="Gene3D" id="3.60.40.10">
    <property type="entry name" value="PPM-type phosphatase domain"/>
    <property type="match status" value="1"/>
</dbReference>
<dbReference type="InterPro" id="IPR015655">
    <property type="entry name" value="PP2C"/>
</dbReference>
<dbReference type="InterPro" id="IPR000222">
    <property type="entry name" value="PP2C_BS"/>
</dbReference>
<dbReference type="InterPro" id="IPR036457">
    <property type="entry name" value="PPM-type-like_dom_sf"/>
</dbReference>
<dbReference type="InterPro" id="IPR001932">
    <property type="entry name" value="PPM-type_phosphatase-like_dom"/>
</dbReference>
<dbReference type="PANTHER" id="PTHR13832:SF803">
    <property type="entry name" value="PROTEIN PHOSPHATASE 1G"/>
    <property type="match status" value="1"/>
</dbReference>
<dbReference type="PANTHER" id="PTHR13832">
    <property type="entry name" value="PROTEIN PHOSPHATASE 2C"/>
    <property type="match status" value="1"/>
</dbReference>
<dbReference type="Pfam" id="PF00481">
    <property type="entry name" value="PP2C"/>
    <property type="match status" value="1"/>
</dbReference>
<dbReference type="SMART" id="SM00331">
    <property type="entry name" value="PP2C_SIG"/>
    <property type="match status" value="1"/>
</dbReference>
<dbReference type="SMART" id="SM00332">
    <property type="entry name" value="PP2Cc"/>
    <property type="match status" value="1"/>
</dbReference>
<dbReference type="SUPFAM" id="SSF81606">
    <property type="entry name" value="PP2C-like"/>
    <property type="match status" value="1"/>
</dbReference>
<dbReference type="PROSITE" id="PS01032">
    <property type="entry name" value="PPM_1"/>
    <property type="match status" value="1"/>
</dbReference>
<dbReference type="PROSITE" id="PS51746">
    <property type="entry name" value="PPM_2"/>
    <property type="match status" value="1"/>
</dbReference>
<gene>
    <name type="ORF">GSPATT00029903001</name>
</gene>
<proteinExistence type="evidence at protein level"/>
<reference key="1">
    <citation type="journal article" date="1994" name="J. Biol. Chem.">
        <title>A membrane-bound protein phosphatase type 2C from Paramecium tetraurelia. Purification, characterization, and cloning.</title>
        <authorList>
            <person name="Klumpp S."/>
            <person name="Hanke C."/>
            <person name="Donella-Deana A."/>
            <person name="Beyer A."/>
            <person name="Kellner R."/>
            <person name="Pinna L.A."/>
            <person name="Schultz J.E."/>
        </authorList>
    </citation>
    <scope>NUCLEOTIDE SEQUENCE [MRNA]</scope>
    <scope>PARTIAL PROTEIN SEQUENCE</scope>
    <source>
        <strain>Stock 51</strain>
    </source>
</reference>
<reference key="2">
    <citation type="journal article" date="2006" name="Nature">
        <title>Global trends of whole-genome duplications revealed by the ciliate Paramecium tetraurelia.</title>
        <authorList>
            <person name="Aury J.-M."/>
            <person name="Jaillon O."/>
            <person name="Duret L."/>
            <person name="Noel B."/>
            <person name="Jubin C."/>
            <person name="Porcel B.M."/>
            <person name="Segurens B."/>
            <person name="Daubin V."/>
            <person name="Anthouard V."/>
            <person name="Aiach N."/>
            <person name="Arnaiz O."/>
            <person name="Billaut A."/>
            <person name="Beisson J."/>
            <person name="Blanc I."/>
            <person name="Bouhouche K."/>
            <person name="Camara F."/>
            <person name="Duharcourt S."/>
            <person name="Guigo R."/>
            <person name="Gogendeau D."/>
            <person name="Katinka M."/>
            <person name="Keller A.-M."/>
            <person name="Kissmehl R."/>
            <person name="Klotz C."/>
            <person name="Koll F."/>
            <person name="Le Mouel A."/>
            <person name="Lepere G."/>
            <person name="Malinsky S."/>
            <person name="Nowacki M."/>
            <person name="Nowak J.K."/>
            <person name="Plattner H."/>
            <person name="Poulain J."/>
            <person name="Ruiz F."/>
            <person name="Serrano V."/>
            <person name="Zagulski M."/>
            <person name="Dessen P."/>
            <person name="Betermier M."/>
            <person name="Weissenbach J."/>
            <person name="Scarpelli C."/>
            <person name="Schaechter V."/>
            <person name="Sperling L."/>
            <person name="Meyer E."/>
            <person name="Cohen J."/>
            <person name="Wincker P."/>
        </authorList>
    </citation>
    <scope>NUCLEOTIDE SEQUENCE [LARGE SCALE GENOMIC DNA]</scope>
    <source>
        <strain>Stock d4-2</strain>
    </source>
</reference>
<keyword id="KW-0903">Direct protein sequencing</keyword>
<keyword id="KW-0378">Hydrolase</keyword>
<keyword id="KW-0460">Magnesium</keyword>
<keyword id="KW-0464">Manganese</keyword>
<keyword id="KW-0472">Membrane</keyword>
<keyword id="KW-0479">Metal-binding</keyword>
<keyword id="KW-0904">Protein phosphatase</keyword>
<keyword id="KW-1185">Reference proteome</keyword>
<protein>
    <recommendedName>
        <fullName>Protein phosphatase 2C 1</fullName>
        <shortName>PP2C 1</shortName>
        <ecNumber evidence="3">3.1.3.16</ecNumber>
    </recommendedName>
</protein>
<feature type="chain" id="PRO_0000057765" description="Protein phosphatase 2C 1">
    <location>
        <begin position="1"/>
        <end position="300"/>
    </location>
</feature>
<feature type="domain" description="PPM-type phosphatase" evidence="3">
    <location>
        <begin position="23"/>
        <end position="298"/>
    </location>
</feature>
<feature type="binding site" evidence="2">
    <location>
        <position position="57"/>
    </location>
    <ligand>
        <name>Mn(2+)</name>
        <dbReference type="ChEBI" id="CHEBI:29035"/>
        <label>1</label>
    </ligand>
</feature>
<feature type="binding site" evidence="2">
    <location>
        <position position="57"/>
    </location>
    <ligand>
        <name>Mn(2+)</name>
        <dbReference type="ChEBI" id="CHEBI:29035"/>
        <label>2</label>
    </ligand>
</feature>
<feature type="binding site" evidence="2">
    <location>
        <position position="58"/>
    </location>
    <ligand>
        <name>Mn(2+)</name>
        <dbReference type="ChEBI" id="CHEBI:29035"/>
        <label>1</label>
    </ligand>
</feature>
<feature type="binding site" evidence="2">
    <location>
        <position position="237"/>
    </location>
    <ligand>
        <name>Mn(2+)</name>
        <dbReference type="ChEBI" id="CHEBI:29035"/>
        <label>2</label>
    </ligand>
</feature>
<feature type="binding site" evidence="2">
    <location>
        <position position="289"/>
    </location>
    <ligand>
        <name>Mn(2+)</name>
        <dbReference type="ChEBI" id="CHEBI:29035"/>
        <label>2</label>
    </ligand>
</feature>
<feature type="sequence conflict" description="In Ref. 1; CAA85448." evidence="4" ref="1">
    <original>P</original>
    <variation>H</variation>
    <location>
        <position position="44"/>
    </location>
</feature>